<name>KCTD9_HUMAN</name>
<evidence type="ECO:0000255" key="1"/>
<evidence type="ECO:0000255" key="2">
    <source>
        <dbReference type="PROSITE-ProRule" id="PRU00037"/>
    </source>
</evidence>
<evidence type="ECO:0000255" key="3">
    <source>
        <dbReference type="PROSITE-ProRule" id="PRU00823"/>
    </source>
</evidence>
<evidence type="ECO:0000269" key="4">
    <source>
    </source>
</evidence>
<evidence type="ECO:0000305" key="5"/>
<evidence type="ECO:0007744" key="6">
    <source>
    </source>
</evidence>
<evidence type="ECO:0007829" key="7">
    <source>
        <dbReference type="PDB" id="5BXH"/>
    </source>
</evidence>
<comment type="function">
    <text evidence="5">Substrate-specific adapter of a BCR (BTB-CUL3-RBX1) E3 ubiquitin-protein ligase complex, which mediates the ubiquitination of target proteins, leading to their degradation by the proteasome.</text>
</comment>
<comment type="pathway">
    <text evidence="5">Protein modification; protein ubiquitination.</text>
</comment>
<comment type="subunit">
    <text evidence="4">Forms pentamers. Component of a complex composed of 5 subunits of KCTD9 and 5 CUL3.</text>
</comment>
<comment type="interaction">
    <interactant intactId="EBI-4397613">
        <id>Q7L273</id>
    </interactant>
    <interactant intactId="EBI-11976299">
        <id>Q5BKX5-3</id>
        <label>ACTMAP</label>
    </interactant>
    <organismsDiffer>false</organismsDiffer>
    <experiments>3</experiments>
</comment>
<comment type="interaction">
    <interactant intactId="EBI-4397613">
        <id>Q7L273</id>
    </interactant>
    <interactant intactId="EBI-10173507">
        <id>Q6UY14-3</id>
        <label>ADAMTSL4</label>
    </interactant>
    <organismsDiffer>false</organismsDiffer>
    <experiments>3</experiments>
</comment>
<comment type="interaction">
    <interactant intactId="EBI-4397613">
        <id>Q7L273</id>
    </interactant>
    <interactant intactId="EBI-11954519">
        <id>Q49AR9</id>
        <label>ANKS1A</label>
    </interactant>
    <organismsDiffer>false</organismsDiffer>
    <experiments>3</experiments>
</comment>
<comment type="interaction">
    <interactant intactId="EBI-4397613">
        <id>Q7L273</id>
    </interactant>
    <interactant intactId="EBI-745213">
        <id>P29972</id>
        <label>AQP1</label>
    </interactant>
    <organismsDiffer>false</organismsDiffer>
    <experiments>3</experiments>
</comment>
<comment type="interaction">
    <interactant intactId="EBI-4397613">
        <id>Q7L273</id>
    </interactant>
    <interactant intactId="EBI-948603">
        <id>Q03989</id>
        <label>ARID5A</label>
    </interactant>
    <organismsDiffer>false</organismsDiffer>
    <experiments>3</experiments>
</comment>
<comment type="interaction">
    <interactant intactId="EBI-4397613">
        <id>Q7L273</id>
    </interactant>
    <interactant intactId="EBI-11524452">
        <id>Q8N9N5-2</id>
        <label>BANP</label>
    </interactant>
    <organismsDiffer>false</organismsDiffer>
    <experiments>3</experiments>
</comment>
<comment type="interaction">
    <interactant intactId="EBI-4397613">
        <id>Q7L273</id>
    </interactant>
    <interactant intactId="EBI-2548012">
        <id>Q9H2G9</id>
        <label>BLZF1</label>
    </interactant>
    <organismsDiffer>false</organismsDiffer>
    <experiments>3</experiments>
</comment>
<comment type="interaction">
    <interactant intactId="EBI-4397613">
        <id>Q7L273</id>
    </interactant>
    <interactant intactId="EBI-751319">
        <id>Q9H257</id>
        <label>CARD9</label>
    </interactant>
    <organismsDiffer>false</organismsDiffer>
    <experiments>3</experiments>
</comment>
<comment type="interaction">
    <interactant intactId="EBI-4397613">
        <id>Q7L273</id>
    </interactant>
    <interactant intactId="EBI-712912">
        <id>Q9HC52</id>
        <label>CBX8</label>
    </interactant>
    <organismsDiffer>false</organismsDiffer>
    <experiments>6</experiments>
</comment>
<comment type="interaction">
    <interactant intactId="EBI-4397613">
        <id>Q7L273</id>
    </interactant>
    <interactant intactId="EBI-295634">
        <id>Q16543</id>
        <label>CDC37</label>
    </interactant>
    <organismsDiffer>false</organismsDiffer>
    <experiments>3</experiments>
</comment>
<comment type="interaction">
    <interactant intactId="EBI-4397613">
        <id>Q7L273</id>
    </interactant>
    <interactant intactId="EBI-2802782">
        <id>Q6NVV7</id>
        <label>CDPF1</label>
    </interactant>
    <organismsDiffer>false</organismsDiffer>
    <experiments>3</experiments>
</comment>
<comment type="interaction">
    <interactant intactId="EBI-4397613">
        <id>Q7L273</id>
    </interactant>
    <interactant intactId="EBI-9038570">
        <id>P27918</id>
        <label>CFP</label>
    </interactant>
    <organismsDiffer>false</organismsDiffer>
    <experiments>3</experiments>
</comment>
<comment type="interaction">
    <interactant intactId="EBI-4397613">
        <id>Q7L273</id>
    </interactant>
    <interactant intactId="EBI-520375">
        <id>P78560</id>
        <label>CRADD</label>
    </interactant>
    <organismsDiffer>false</organismsDiffer>
    <experiments>3</experiments>
</comment>
<comment type="interaction">
    <interactant intactId="EBI-4397613">
        <id>Q7L273</id>
    </interactant>
    <interactant intactId="EBI-456129">
        <id>Q13618</id>
        <label>CUL3</label>
    </interactant>
    <organismsDiffer>false</organismsDiffer>
    <experiments>11</experiments>
</comment>
<comment type="interaction">
    <interactant intactId="EBI-4397613">
        <id>Q7L273</id>
    </interactant>
    <interactant intactId="EBI-742054">
        <id>Q96D03</id>
        <label>DDIT4L</label>
    </interactant>
    <organismsDiffer>false</organismsDiffer>
    <experiments>3</experiments>
</comment>
<comment type="interaction">
    <interactant intactId="EBI-4397613">
        <id>Q7L273</id>
    </interactant>
    <interactant intactId="EBI-748597">
        <id>Q05D60</id>
        <label>DEUP1</label>
    </interactant>
    <organismsDiffer>false</organismsDiffer>
    <experiments>3</experiments>
</comment>
<comment type="interaction">
    <interactant intactId="EBI-4397613">
        <id>Q7L273</id>
    </interactant>
    <interactant intactId="EBI-2339219">
        <id>Q08426</id>
        <label>EHHADH</label>
    </interactant>
    <organismsDiffer>false</organismsDiffer>
    <experiments>4</experiments>
</comment>
<comment type="interaction">
    <interactant intactId="EBI-4397613">
        <id>Q7L273</id>
    </interactant>
    <interactant intactId="EBI-6255981">
        <id>Q7L775</id>
        <label>EPM2AIP1</label>
    </interactant>
    <organismsDiffer>false</organismsDiffer>
    <experiments>3</experiments>
</comment>
<comment type="interaction">
    <interactant intactId="EBI-4397613">
        <id>Q7L273</id>
    </interactant>
    <interactant intactId="EBI-741626">
        <id>Q9H5Z6</id>
        <label>FAM124B</label>
    </interactant>
    <organismsDiffer>false</organismsDiffer>
    <experiments>3</experiments>
</comment>
<comment type="interaction">
    <interactant intactId="EBI-4397613">
        <id>Q7L273</id>
    </interactant>
    <interactant intactId="EBI-744104">
        <id>P55040</id>
        <label>GEM</label>
    </interactant>
    <organismsDiffer>false</organismsDiffer>
    <experiments>6</experiments>
</comment>
<comment type="interaction">
    <interactant intactId="EBI-4397613">
        <id>Q7L273</id>
    </interactant>
    <interactant intactId="EBI-11163335">
        <id>Q9NYA3</id>
        <label>GOLGA6A</label>
    </interactant>
    <organismsDiffer>false</organismsDiffer>
    <experiments>4</experiments>
</comment>
<comment type="interaction">
    <interactant intactId="EBI-4397613">
        <id>Q7L273</id>
    </interactant>
    <interactant intactId="EBI-5916454">
        <id>A6NEM1</id>
        <label>GOLGA6L9</label>
    </interactant>
    <organismsDiffer>false</organismsDiffer>
    <experiments>3</experiments>
</comment>
<comment type="interaction">
    <interactant intactId="EBI-4397613">
        <id>Q7L273</id>
    </interactant>
    <interactant intactId="EBI-739467">
        <id>Q9H8Y8</id>
        <label>GORASP2</label>
    </interactant>
    <organismsDiffer>false</organismsDiffer>
    <experiments>7</experiments>
</comment>
<comment type="interaction">
    <interactant intactId="EBI-4397613">
        <id>Q7L273</id>
    </interactant>
    <interactant intactId="EBI-751540">
        <id>O95872</id>
        <label>GPANK1</label>
    </interactant>
    <organismsDiffer>false</organismsDiffer>
    <experiments>3</experiments>
</comment>
<comment type="interaction">
    <interactant intactId="EBI-4397613">
        <id>Q7L273</id>
    </interactant>
    <interactant intactId="EBI-740785">
        <id>P49639</id>
        <label>HOXA1</label>
    </interactant>
    <organismsDiffer>false</organismsDiffer>
    <experiments>5</experiments>
</comment>
<comment type="interaction">
    <interactant intactId="EBI-4397613">
        <id>Q7L273</id>
    </interactant>
    <interactant intactId="EBI-1752118">
        <id>P31273</id>
        <label>HOXC8</label>
    </interactant>
    <organismsDiffer>false</organismsDiffer>
    <experiments>3</experiments>
</comment>
<comment type="interaction">
    <interactant intactId="EBI-4397613">
        <id>Q7L273</id>
    </interactant>
    <interactant intactId="EBI-11955401">
        <id>Q86VF2-5</id>
        <label>IGFN1</label>
    </interactant>
    <organismsDiffer>false</organismsDiffer>
    <experiments>3</experiments>
</comment>
<comment type="interaction">
    <interactant intactId="EBI-4397613">
        <id>Q7L273</id>
    </interactant>
    <interactant intactId="EBI-17178971">
        <id>Q14005-2</id>
        <label>IL16</label>
    </interactant>
    <organismsDiffer>false</organismsDiffer>
    <experiments>3</experiments>
</comment>
<comment type="interaction">
    <interactant intactId="EBI-4397613">
        <id>Q7L273</id>
    </interactant>
    <interactant intactId="EBI-6509505">
        <id>Q0VD86</id>
        <label>INCA1</label>
    </interactant>
    <organismsDiffer>false</organismsDiffer>
    <experiments>3</experiments>
</comment>
<comment type="interaction">
    <interactant intactId="EBI-4397613">
        <id>Q7L273</id>
    </interactant>
    <interactant intactId="EBI-4397613">
        <id>Q7L273</id>
        <label>KCTD9</label>
    </interactant>
    <organismsDiffer>false</organismsDiffer>
    <experiments>4</experiments>
</comment>
<comment type="interaction">
    <interactant intactId="EBI-4397613">
        <id>Q7L273</id>
    </interactant>
    <interactant intactId="EBI-8472129">
        <id>Q9HAQ2</id>
        <label>KIF9</label>
    </interactant>
    <organismsDiffer>false</organismsDiffer>
    <experiments>3</experiments>
</comment>
<comment type="interaction">
    <interactant intactId="EBI-4397613">
        <id>Q7L273</id>
    </interactant>
    <interactant intactId="EBI-724915">
        <id>Q53HC5</id>
        <label>KLHL26</label>
    </interactant>
    <organismsDiffer>false</organismsDiffer>
    <experiments>3</experiments>
</comment>
<comment type="interaction">
    <interactant intactId="EBI-4397613">
        <id>Q7L273</id>
    </interactant>
    <interactant intactId="EBI-948001">
        <id>Q15323</id>
        <label>KRT31</label>
    </interactant>
    <organismsDiffer>false</organismsDiffer>
    <experiments>3</experiments>
</comment>
<comment type="interaction">
    <interactant intactId="EBI-4397613">
        <id>Q7L273</id>
    </interactant>
    <interactant intactId="EBI-1047093">
        <id>O76011</id>
        <label>KRT34</label>
    </interactant>
    <organismsDiffer>false</organismsDiffer>
    <experiments>3</experiments>
</comment>
<comment type="interaction">
    <interactant intactId="EBI-4397613">
        <id>Q7L273</id>
    </interactant>
    <interactant intactId="EBI-1058674">
        <id>Q92764</id>
        <label>KRT35</label>
    </interactant>
    <organismsDiffer>false</organismsDiffer>
    <experiments>3</experiments>
</comment>
<comment type="interaction">
    <interactant intactId="EBI-4397613">
        <id>Q7L273</id>
    </interactant>
    <interactant intactId="EBI-10171697">
        <id>Q6A162</id>
        <label>KRT40</label>
    </interactant>
    <organismsDiffer>false</organismsDiffer>
    <experiments>3</experiments>
</comment>
<comment type="interaction">
    <interactant intactId="EBI-4397613">
        <id>Q7L273</id>
    </interactant>
    <interactant intactId="EBI-11953846">
        <id>Q52LG2</id>
        <label>KRTAP13-2</label>
    </interactant>
    <organismsDiffer>false</organismsDiffer>
    <experiments>3</experiments>
</comment>
<comment type="interaction">
    <interactant intactId="EBI-4397613">
        <id>Q7L273</id>
    </interactant>
    <interactant intactId="EBI-10241252">
        <id>Q3SY46</id>
        <label>KRTAP13-3</label>
    </interactant>
    <organismsDiffer>false</organismsDiffer>
    <experiments>3</experiments>
</comment>
<comment type="interaction">
    <interactant intactId="EBI-4397613">
        <id>Q7L273</id>
    </interactant>
    <interactant intactId="EBI-739832">
        <id>Q8TBB1</id>
        <label>LNX1</label>
    </interactant>
    <organismsDiffer>false</organismsDiffer>
    <experiments>6</experiments>
</comment>
<comment type="interaction">
    <interactant intactId="EBI-4397613">
        <id>Q7L273</id>
    </interactant>
    <interactant intactId="EBI-2341787">
        <id>Q17RB8</id>
        <label>LONRF1</label>
    </interactant>
    <organismsDiffer>false</organismsDiffer>
    <experiments>6</experiments>
</comment>
<comment type="interaction">
    <interactant intactId="EBI-4397613">
        <id>Q7L273</id>
    </interactant>
    <interactant intactId="EBI-77889">
        <id>Q9UI95</id>
        <label>MAD2L2</label>
    </interactant>
    <organismsDiffer>false</organismsDiffer>
    <experiments>3</experiments>
</comment>
<comment type="interaction">
    <interactant intactId="EBI-4397613">
        <id>Q7L273</id>
    </interactant>
    <interactant intactId="EBI-12516603">
        <id>Q8WWY6</id>
        <label>MBD3L1</label>
    </interactant>
    <organismsDiffer>false</organismsDiffer>
    <experiments>3</experiments>
</comment>
<comment type="interaction">
    <interactant intactId="EBI-4397613">
        <id>Q7L273</id>
    </interactant>
    <interactant intactId="EBI-16439278">
        <id>Q6FHY5</id>
        <label>MEOX2</label>
    </interactant>
    <organismsDiffer>false</organismsDiffer>
    <experiments>3</experiments>
</comment>
<comment type="interaction">
    <interactant intactId="EBI-4397613">
        <id>Q7L273</id>
    </interactant>
    <interactant intactId="EBI-2801965">
        <id>Q5JXC2</id>
        <label>MIIP</label>
    </interactant>
    <organismsDiffer>false</organismsDiffer>
    <experiments>3</experiments>
</comment>
<comment type="interaction">
    <interactant intactId="EBI-4397613">
        <id>Q7L273</id>
    </interactant>
    <interactant intactId="EBI-1246261">
        <id>O14561</id>
        <label>NDUFAB1</label>
    </interactant>
    <organismsDiffer>false</organismsDiffer>
    <experiments>3</experiments>
</comment>
<comment type="interaction">
    <interactant intactId="EBI-4397613">
        <id>Q7L273</id>
    </interactant>
    <interactant intactId="EBI-740897">
        <id>Q9GZT8</id>
        <label>NIF3L1</label>
    </interactant>
    <organismsDiffer>false</organismsDiffer>
    <experiments>3</experiments>
</comment>
<comment type="interaction">
    <interactant intactId="EBI-4397613">
        <id>Q7L273</id>
    </interactant>
    <interactant intactId="EBI-741158">
        <id>Q96HA8</id>
        <label>NTAQ1</label>
    </interactant>
    <organismsDiffer>false</organismsDiffer>
    <experiments>3</experiments>
</comment>
<comment type="interaction">
    <interactant intactId="EBI-4397613">
        <id>Q7L273</id>
    </interactant>
    <interactant intactId="EBI-9050429">
        <id>Q8NFH5</id>
        <label>NUP35</label>
    </interactant>
    <organismsDiffer>false</organismsDiffer>
    <experiments>8</experiments>
</comment>
<comment type="interaction">
    <interactant intactId="EBI-4397613">
        <id>Q7L273</id>
    </interactant>
    <interactant intactId="EBI-10239064">
        <id>Q17RL8</id>
        <label>PDZD4</label>
    </interactant>
    <organismsDiffer>false</organismsDiffer>
    <experiments>3</experiments>
</comment>
<comment type="interaction">
    <interactant intactId="EBI-4397613">
        <id>Q7L273</id>
    </interactant>
    <interactant intactId="EBI-357275">
        <id>Q99471</id>
        <label>PFDN5</label>
    </interactant>
    <organismsDiffer>false</organismsDiffer>
    <experiments>3</experiments>
</comment>
<comment type="interaction">
    <interactant intactId="EBI-4397613">
        <id>Q7L273</id>
    </interactant>
    <interactant intactId="EBI-79165">
        <id>Q9NRD5</id>
        <label>PICK1</label>
    </interactant>
    <organismsDiffer>false</organismsDiffer>
    <experiments>3</experiments>
</comment>
<comment type="interaction">
    <interactant intactId="EBI-4397613">
        <id>Q7L273</id>
    </interactant>
    <interactant intactId="EBI-741582">
        <id>O60568</id>
        <label>PLOD3</label>
    </interactant>
    <organismsDiffer>false</organismsDiffer>
    <experiments>3</experiments>
</comment>
<comment type="interaction">
    <interactant intactId="EBI-4397613">
        <id>Q7L273</id>
    </interactant>
    <interactant intactId="EBI-746368">
        <id>Q8N490</id>
        <label>PNKD</label>
    </interactant>
    <organismsDiffer>false</organismsDiffer>
    <experiments>3</experiments>
</comment>
<comment type="interaction">
    <interactant intactId="EBI-4397613">
        <id>Q7L273</id>
    </interactant>
    <interactant intactId="EBI-11986735">
        <id>Q8WVV4-1</id>
        <label>POF1B</label>
    </interactant>
    <organismsDiffer>false</organismsDiffer>
    <experiments>3</experiments>
</comment>
<comment type="interaction">
    <interactant intactId="EBI-4397613">
        <id>Q7L273</id>
    </interactant>
    <interactant intactId="EBI-10293968">
        <id>Q96T49</id>
        <label>PPP1R16B</label>
    </interactant>
    <organismsDiffer>false</organismsDiffer>
    <experiments>3</experiments>
</comment>
<comment type="interaction">
    <interactant intactId="EBI-4397613">
        <id>Q7L273</id>
    </interactant>
    <interactant intactId="EBI-2557469">
        <id>Q6NYC8</id>
        <label>PPP1R18</label>
    </interactant>
    <organismsDiffer>false</organismsDiffer>
    <experiments>3</experiments>
</comment>
<comment type="interaction">
    <interactant intactId="EBI-4397613">
        <id>Q7L273</id>
    </interactant>
    <interactant intactId="EBI-11320284">
        <id>Q9NQX0</id>
        <label>PRDM6</label>
    </interactant>
    <organismsDiffer>false</organismsDiffer>
    <experiments>3</experiments>
</comment>
<comment type="interaction">
    <interactant intactId="EBI-4397613">
        <id>Q7L273</id>
    </interactant>
    <interactant intactId="EBI-1383852">
        <id>P54646</id>
        <label>PRKAA2</label>
    </interactant>
    <organismsDiffer>false</organismsDiffer>
    <experiments>3</experiments>
</comment>
<comment type="interaction">
    <interactant intactId="EBI-4397613">
        <id>Q7L273</id>
    </interactant>
    <interactant intactId="EBI-359352">
        <id>P25786</id>
        <label>PSMA1</label>
    </interactant>
    <organismsDiffer>false</organismsDiffer>
    <experiments>6</experiments>
</comment>
<comment type="interaction">
    <interactant intactId="EBI-4397613">
        <id>Q7L273</id>
    </interactant>
    <interactant intactId="EBI-359335">
        <id>P49721</id>
        <label>PSMB2</label>
    </interactant>
    <organismsDiffer>false</organismsDiffer>
    <experiments>3</experiments>
</comment>
<comment type="interaction">
    <interactant intactId="EBI-4397613">
        <id>Q7L273</id>
    </interactant>
    <interactant intactId="EBI-740322">
        <id>Q93062</id>
        <label>RBPMS</label>
    </interactant>
    <organismsDiffer>false</organismsDiffer>
    <experiments>3</experiments>
</comment>
<comment type="interaction">
    <interactant intactId="EBI-4397613">
        <id>Q7L273</id>
    </interactant>
    <interactant intactId="EBI-746118">
        <id>Q8HWS3</id>
        <label>RFX6</label>
    </interactant>
    <organismsDiffer>false</organismsDiffer>
    <experiments>3</experiments>
</comment>
<comment type="interaction">
    <interactant intactId="EBI-4397613">
        <id>Q7L273</id>
    </interactant>
    <interactant intactId="EBI-6257312">
        <id>Q9BVN2</id>
        <label>RUSC1</label>
    </interactant>
    <organismsDiffer>false</organismsDiffer>
    <experiments>3</experiments>
</comment>
<comment type="interaction">
    <interactant intactId="EBI-4397613">
        <id>Q7L273</id>
    </interactant>
    <interactant intactId="EBI-12000762">
        <id>Q7Z5V6-2</id>
        <label>SAXO4</label>
    </interactant>
    <organismsDiffer>false</organismsDiffer>
    <experiments>3</experiments>
</comment>
<comment type="interaction">
    <interactant intactId="EBI-4397613">
        <id>Q7L273</id>
    </interactant>
    <interactant intactId="EBI-727004">
        <id>O00560</id>
        <label>SDCBP</label>
    </interactant>
    <organismsDiffer>false</organismsDiffer>
    <experiments>6</experiments>
</comment>
<comment type="interaction">
    <interactant intactId="EBI-4397613">
        <id>Q7L273</id>
    </interactant>
    <interactant intactId="EBI-307486">
        <id>P63208</id>
        <label>SKP1</label>
    </interactant>
    <organismsDiffer>false</organismsDiffer>
    <experiments>3</experiments>
</comment>
<comment type="interaction">
    <interactant intactId="EBI-4397613">
        <id>Q7L273</id>
    </interactant>
    <interactant intactId="EBI-10269374">
        <id>Q8ND83</id>
        <label>SLAIN1</label>
    </interactant>
    <organismsDiffer>false</organismsDiffer>
    <experiments>3</experiments>
</comment>
<comment type="interaction">
    <interactant intactId="EBI-4397613">
        <id>Q7L273</id>
    </interactant>
    <interactant intactId="EBI-12275818">
        <id>Q53HV7-2</id>
        <label>SMUG1</label>
    </interactant>
    <organismsDiffer>false</organismsDiffer>
    <experiments>3</experiments>
</comment>
<comment type="interaction">
    <interactant intactId="EBI-4397613">
        <id>Q7L273</id>
    </interactant>
    <interactant intactId="EBI-3923692">
        <id>Q496A3</id>
        <label>SPATS1</label>
    </interactant>
    <organismsDiffer>false</organismsDiffer>
    <experiments>3</experiments>
</comment>
<comment type="interaction">
    <interactant intactId="EBI-4397613">
        <id>Q7L273</id>
    </interactant>
    <interactant intactId="EBI-742688">
        <id>Q9NZD8</id>
        <label>SPG21</label>
    </interactant>
    <organismsDiffer>false</organismsDiffer>
    <experiments>3</experiments>
</comment>
<comment type="interaction">
    <interactant intactId="EBI-4397613">
        <id>Q7L273</id>
    </interactant>
    <interactant intactId="EBI-10174456">
        <id>Q8N865</id>
        <label>SPMIP4</label>
    </interactant>
    <organismsDiffer>false</organismsDiffer>
    <experiments>3</experiments>
</comment>
<comment type="interaction">
    <interactant intactId="EBI-4397613">
        <id>Q7L273</id>
    </interactant>
    <interactant intactId="EBI-10269322">
        <id>Q8NCR6</id>
        <label>SPMIP6</label>
    </interactant>
    <organismsDiffer>false</organismsDiffer>
    <experiments>3</experiments>
</comment>
<comment type="interaction">
    <interactant intactId="EBI-4397613">
        <id>Q7L273</id>
    </interactant>
    <interactant intactId="EBI-743976">
        <id>Q96LM6</id>
        <label>SPMIP9</label>
    </interactant>
    <organismsDiffer>false</organismsDiffer>
    <experiments>3</experiments>
</comment>
<comment type="interaction">
    <interactant intactId="EBI-4397613">
        <id>Q7L273</id>
    </interactant>
    <interactant intactId="EBI-714135">
        <id>O75558</id>
        <label>STX11</label>
    </interactant>
    <organismsDiffer>false</organismsDiffer>
    <experiments>3</experiments>
</comment>
<comment type="interaction">
    <interactant intactId="EBI-4397613">
        <id>Q7L273</id>
    </interactant>
    <interactant intactId="EBI-10246152">
        <id>Q5T7P8-2</id>
        <label>SYT6</label>
    </interactant>
    <organismsDiffer>false</organismsDiffer>
    <experiments>6</experiments>
</comment>
<comment type="interaction">
    <interactant intactId="EBI-4397613">
        <id>Q7L273</id>
    </interactant>
    <interactant intactId="EBI-745958">
        <id>Q5VWN6</id>
        <label>TASOR2</label>
    </interactant>
    <organismsDiffer>false</organismsDiffer>
    <experiments>3</experiments>
</comment>
<comment type="interaction">
    <interactant intactId="EBI-4397613">
        <id>Q7L273</id>
    </interactant>
    <interactant intactId="EBI-10172380">
        <id>Q5VWN6-2</id>
        <label>TASOR2</label>
    </interactant>
    <organismsDiffer>false</organismsDiffer>
    <experiments>3</experiments>
</comment>
<comment type="interaction">
    <interactant intactId="EBI-4397613">
        <id>Q7L273</id>
    </interactant>
    <interactant intactId="EBI-11139477">
        <id>Q96N21</id>
        <label>TEPSIN</label>
    </interactant>
    <organismsDiffer>false</organismsDiffer>
    <experiments>3</experiments>
</comment>
<comment type="interaction">
    <interactant intactId="EBI-4397613">
        <id>Q7L273</id>
    </interactant>
    <interactant intactId="EBI-949753">
        <id>Q63HR2</id>
        <label>TNS2</label>
    </interactant>
    <organismsDiffer>false</organismsDiffer>
    <experiments>3</experiments>
</comment>
<comment type="interaction">
    <interactant intactId="EBI-4397613">
        <id>Q7L273</id>
    </interactant>
    <interactant intactId="EBI-719493">
        <id>P14373</id>
        <label>TRIM27</label>
    </interactant>
    <organismsDiffer>false</organismsDiffer>
    <experiments>6</experiments>
</comment>
<comment type="interaction">
    <interactant intactId="EBI-4397613">
        <id>Q7L273</id>
    </interactant>
    <interactant intactId="EBI-742790">
        <id>Q13049</id>
        <label>TRIM32</label>
    </interactant>
    <organismsDiffer>false</organismsDiffer>
    <experiments>6</experiments>
</comment>
<comment type="interaction">
    <interactant intactId="EBI-4397613">
        <id>Q7L273</id>
    </interactant>
    <interactant intactId="EBI-5235829">
        <id>Q8IWZ5</id>
        <label>TRIM42</label>
    </interactant>
    <organismsDiffer>false</organismsDiffer>
    <experiments>6</experiments>
</comment>
<comment type="interaction">
    <interactant intactId="EBI-4397613">
        <id>Q7L273</id>
    </interactant>
    <interactant intactId="EBI-742327">
        <id>Q15654</id>
        <label>TRIP6</label>
    </interactant>
    <organismsDiffer>false</organismsDiffer>
    <experiments>3</experiments>
</comment>
<comment type="interaction">
    <interactant intactId="EBI-4397613">
        <id>Q7L273</id>
    </interactant>
    <interactant intactId="EBI-12817837">
        <id>Q9H9P5-5</id>
        <label>UNKL</label>
    </interactant>
    <organismsDiffer>false</organismsDiffer>
    <experiments>3</experiments>
</comment>
<comment type="interaction">
    <interactant intactId="EBI-4397613">
        <id>Q7L273</id>
    </interactant>
    <interactant intactId="EBI-373242">
        <id>Q9UK80</id>
        <label>USP21</label>
    </interactant>
    <organismsDiffer>false</organismsDiffer>
    <experiments>3</experiments>
</comment>
<comment type="interaction">
    <interactant intactId="EBI-4397613">
        <id>Q7L273</id>
    </interactant>
    <interactant intactId="EBI-11975223">
        <id>Q70EL1-9</id>
        <label>USP54</label>
    </interactant>
    <organismsDiffer>false</organismsDiffer>
    <experiments>3</experiments>
</comment>
<comment type="interaction">
    <interactant intactId="EBI-4397613">
        <id>Q7L273</id>
    </interactant>
    <interactant intactId="EBI-7705033">
        <id>Q9BRX9</id>
        <label>WDR83</label>
    </interactant>
    <organismsDiffer>false</organismsDiffer>
    <experiments>3</experiments>
</comment>
<comment type="interaction">
    <interactant intactId="EBI-4397613">
        <id>Q7L273</id>
    </interactant>
    <interactant intactId="EBI-739899">
        <id>P24278</id>
        <label>ZBTB25</label>
    </interactant>
    <organismsDiffer>false</organismsDiffer>
    <experiments>3</experiments>
</comment>
<comment type="interaction">
    <interactant intactId="EBI-4397613">
        <id>Q7L273</id>
    </interactant>
    <interactant intactId="EBI-12287587">
        <id>B2RXF5</id>
        <label>ZBTB42</label>
    </interactant>
    <organismsDiffer>false</organismsDiffer>
    <experiments>3</experiments>
</comment>
<comment type="interaction">
    <interactant intactId="EBI-4397613">
        <id>Q7L273</id>
    </interactant>
    <interactant intactId="EBI-347633">
        <id>Q9H9D4</id>
        <label>ZNF408</label>
    </interactant>
    <organismsDiffer>false</organismsDiffer>
    <experiments>3</experiments>
</comment>
<comment type="interaction">
    <interactant intactId="EBI-4397613">
        <id>Q7L273</id>
    </interactant>
    <interactant intactId="EBI-743265">
        <id>Q9BUY5</id>
        <label>ZNF426</label>
    </interactant>
    <organismsDiffer>false</organismsDiffer>
    <experiments>3</experiments>
</comment>
<comment type="interaction">
    <interactant intactId="EBI-4397613">
        <id>Q7L273</id>
    </interactant>
    <interactant intactId="EBI-4395669">
        <id>Q6ZNG0</id>
        <label>ZNF620</label>
    </interactant>
    <organismsDiffer>false</organismsDiffer>
    <experiments>3</experiments>
</comment>
<comment type="interaction">
    <interactant intactId="EBI-4397613">
        <id>Q7L273</id>
    </interactant>
    <interactant intactId="EBI-7254550">
        <id>P36508</id>
        <label>ZNF76</label>
    </interactant>
    <organismsDiffer>false</organismsDiffer>
    <experiments>3</experiments>
</comment>
<comment type="sequence caution" evidence="5">
    <conflict type="erroneous initiation">
        <sequence resource="EMBL-CDS" id="BAA90904"/>
    </conflict>
</comment>
<organism>
    <name type="scientific">Homo sapiens</name>
    <name type="common">Human</name>
    <dbReference type="NCBI Taxonomy" id="9606"/>
    <lineage>
        <taxon>Eukaryota</taxon>
        <taxon>Metazoa</taxon>
        <taxon>Chordata</taxon>
        <taxon>Craniata</taxon>
        <taxon>Vertebrata</taxon>
        <taxon>Euteleostomi</taxon>
        <taxon>Mammalia</taxon>
        <taxon>Eutheria</taxon>
        <taxon>Euarchontoglires</taxon>
        <taxon>Primates</taxon>
        <taxon>Haplorrhini</taxon>
        <taxon>Catarrhini</taxon>
        <taxon>Hominidae</taxon>
        <taxon>Homo</taxon>
    </lineage>
</organism>
<accession>Q7L273</accession>
<accession>Q6NUM8</accession>
<accession>Q9NXV4</accession>
<proteinExistence type="evidence at protein level"/>
<protein>
    <recommendedName>
        <fullName>BTB/POZ domain-containing protein KCTD9</fullName>
    </recommendedName>
</protein>
<feature type="chain" id="PRO_0000191293" description="BTB/POZ domain-containing protein KCTD9">
    <location>
        <begin position="1"/>
        <end position="389"/>
    </location>
</feature>
<feature type="domain" description="KHA" evidence="3">
    <location>
        <begin position="3"/>
        <end position="82"/>
    </location>
</feature>
<feature type="domain" description="BTB" evidence="2">
    <location>
        <begin position="89"/>
        <end position="161"/>
    </location>
</feature>
<feature type="domain" description="Pentapeptide repeat 1" evidence="1">
    <location>
        <begin position="224"/>
        <end position="256"/>
    </location>
</feature>
<feature type="domain" description="Pentapeptide repeat 2" evidence="1">
    <location>
        <begin position="258"/>
        <end position="297"/>
    </location>
</feature>
<feature type="domain" description="Pentapeptide repeat 3" evidence="1">
    <location>
        <begin position="338"/>
        <end position="376"/>
    </location>
</feature>
<feature type="modified residue" description="Phosphoserine" evidence="6">
    <location>
        <position position="11"/>
    </location>
</feature>
<feature type="mutagenesis site" description="Impaired interaction with CUL3." evidence="4">
    <original>V</original>
    <variation>A</variation>
    <location>
        <position position="125"/>
    </location>
</feature>
<feature type="sequence conflict" description="In Ref. 1; AAH68518." evidence="5" ref="1">
    <original>P</original>
    <variation>R</variation>
    <location>
        <position position="12"/>
    </location>
</feature>
<feature type="strand" evidence="7">
    <location>
        <begin position="90"/>
        <end position="95"/>
    </location>
</feature>
<feature type="strand" evidence="7">
    <location>
        <begin position="98"/>
        <end position="103"/>
    </location>
</feature>
<feature type="helix" evidence="7">
    <location>
        <begin position="104"/>
        <end position="108"/>
    </location>
</feature>
<feature type="helix" evidence="7">
    <location>
        <begin position="115"/>
        <end position="119"/>
    </location>
</feature>
<feature type="strand" evidence="7">
    <location>
        <begin position="136"/>
        <end position="138"/>
    </location>
</feature>
<feature type="turn" evidence="7">
    <location>
        <begin position="143"/>
        <end position="145"/>
    </location>
</feature>
<feature type="helix" evidence="7">
    <location>
        <begin position="146"/>
        <end position="154"/>
    </location>
</feature>
<feature type="helix" evidence="7">
    <location>
        <begin position="165"/>
        <end position="175"/>
    </location>
</feature>
<feature type="helix" evidence="7">
    <location>
        <begin position="178"/>
        <end position="188"/>
    </location>
</feature>
<sequence>MRRVTLFLNGSPKNGKVVAVYGTLSDLLSVASSKLGIKATSVYNGKGGLIDDIALIRDDDVLFVCEGEPFIDPQTDSKPPEGLLGFHTDWLTLNVGGRYFTTTRSTLVNKEPDSMLAHMFKDKGVWGNKQDHRGAFLIDRSPEYFEPILNYLRHGQLIVNDGINLLGVLEEARFFGIDSLIEHLEVAIKNSQPPEDHSPISRKEFVRFLLATPTKSELRCQGLNFSGADLSRLDLRYINFKMANLSRCNLAHANLCCANLERADLSGSVLDCANLQGVKMLCSNAEGASLKLCNFEDPSGLKANLEGANLKGVDMEGSQMTGINLRVATLKNAKLKNCNLRGATLAGTDLENCDLSGCDLQEANLRGSNVKGAIFEEMLTPLHMSQSVR</sequence>
<dbReference type="EMBL" id="BC021216">
    <property type="protein sequence ID" value="AAH21216.2"/>
    <property type="molecule type" value="mRNA"/>
</dbReference>
<dbReference type="EMBL" id="BC068518">
    <property type="protein sequence ID" value="AAH68518.1"/>
    <property type="molecule type" value="mRNA"/>
</dbReference>
<dbReference type="EMBL" id="AK000045">
    <property type="protein sequence ID" value="BAA90904.1"/>
    <property type="status" value="ALT_INIT"/>
    <property type="molecule type" value="mRNA"/>
</dbReference>
<dbReference type="CCDS" id="CCDS6048.1"/>
<dbReference type="RefSeq" id="NP_060104.2">
    <property type="nucleotide sequence ID" value="NM_017634.3"/>
</dbReference>
<dbReference type="PDB" id="5BXH">
    <property type="method" value="X-ray"/>
    <property type="resolution" value="2.76 A"/>
    <property type="chains" value="A/B/C/D/E=89-191"/>
</dbReference>
<dbReference type="PDBsum" id="5BXH"/>
<dbReference type="SMR" id="Q7L273"/>
<dbReference type="BioGRID" id="120153">
    <property type="interactions" value="231"/>
</dbReference>
<dbReference type="FunCoup" id="Q7L273">
    <property type="interactions" value="1164"/>
</dbReference>
<dbReference type="IntAct" id="Q7L273">
    <property type="interactions" value="109"/>
</dbReference>
<dbReference type="MINT" id="Q7L273"/>
<dbReference type="STRING" id="9606.ENSP00000221200"/>
<dbReference type="GlyGen" id="Q7L273">
    <property type="glycosylation" value="1 site, 1 O-linked glycan (1 site)"/>
</dbReference>
<dbReference type="iPTMnet" id="Q7L273"/>
<dbReference type="PhosphoSitePlus" id="Q7L273"/>
<dbReference type="BioMuta" id="KCTD9"/>
<dbReference type="DMDM" id="50400921"/>
<dbReference type="jPOST" id="Q7L273"/>
<dbReference type="MassIVE" id="Q7L273"/>
<dbReference type="PaxDb" id="9606-ENSP00000221200"/>
<dbReference type="PeptideAtlas" id="Q7L273"/>
<dbReference type="ProteomicsDB" id="68757"/>
<dbReference type="Pumba" id="Q7L273"/>
<dbReference type="Antibodypedia" id="22883">
    <property type="antibodies" value="248 antibodies from 22 providers"/>
</dbReference>
<dbReference type="DNASU" id="54793"/>
<dbReference type="Ensembl" id="ENST00000221200.9">
    <property type="protein sequence ID" value="ENSP00000221200.4"/>
    <property type="gene ID" value="ENSG00000104756.17"/>
</dbReference>
<dbReference type="GeneID" id="54793"/>
<dbReference type="KEGG" id="hsa:54793"/>
<dbReference type="MANE-Select" id="ENST00000221200.9">
    <property type="protein sequence ID" value="ENSP00000221200.4"/>
    <property type="RefSeq nucleotide sequence ID" value="NM_017634.4"/>
    <property type="RefSeq protein sequence ID" value="NP_060104.2"/>
</dbReference>
<dbReference type="UCSC" id="uc003xeo.4">
    <property type="organism name" value="human"/>
</dbReference>
<dbReference type="AGR" id="HGNC:22401"/>
<dbReference type="CTD" id="54793"/>
<dbReference type="DisGeNET" id="54793"/>
<dbReference type="GeneCards" id="KCTD9"/>
<dbReference type="HGNC" id="HGNC:22401">
    <property type="gene designation" value="KCTD9"/>
</dbReference>
<dbReference type="HPA" id="ENSG00000104756">
    <property type="expression patterns" value="Low tissue specificity"/>
</dbReference>
<dbReference type="neXtProt" id="NX_Q7L273"/>
<dbReference type="OpenTargets" id="ENSG00000104756"/>
<dbReference type="PharmGKB" id="PA134869993"/>
<dbReference type="VEuPathDB" id="HostDB:ENSG00000104756"/>
<dbReference type="eggNOG" id="KOG1665">
    <property type="taxonomic scope" value="Eukaryota"/>
</dbReference>
<dbReference type="GeneTree" id="ENSGT00940000154314"/>
<dbReference type="HOGENOM" id="CLU_043894_0_0_1"/>
<dbReference type="InParanoid" id="Q7L273"/>
<dbReference type="OMA" id="YACIKNA"/>
<dbReference type="OrthoDB" id="9989223at2759"/>
<dbReference type="PAN-GO" id="Q7L273">
    <property type="GO annotations" value="0 GO annotations based on evolutionary models"/>
</dbReference>
<dbReference type="PhylomeDB" id="Q7L273"/>
<dbReference type="TreeFam" id="TF313754"/>
<dbReference type="PathwayCommons" id="Q7L273"/>
<dbReference type="SignaLink" id="Q7L273"/>
<dbReference type="UniPathway" id="UPA00143"/>
<dbReference type="BioGRID-ORCS" id="54793">
    <property type="hits" value="73 hits in 1123 CRISPR screens"/>
</dbReference>
<dbReference type="ChiTaRS" id="KCTD9">
    <property type="organism name" value="human"/>
</dbReference>
<dbReference type="EvolutionaryTrace" id="Q7L273"/>
<dbReference type="GenomeRNAi" id="54793"/>
<dbReference type="Pharos" id="Q7L273">
    <property type="development level" value="Tbio"/>
</dbReference>
<dbReference type="PRO" id="PR:Q7L273"/>
<dbReference type="Proteomes" id="UP000005640">
    <property type="component" value="Chromosome 8"/>
</dbReference>
<dbReference type="RNAct" id="Q7L273">
    <property type="molecule type" value="protein"/>
</dbReference>
<dbReference type="Bgee" id="ENSG00000104756">
    <property type="expression patterns" value="Expressed in blood vessel layer and 194 other cell types or tissues"/>
</dbReference>
<dbReference type="ExpressionAtlas" id="Q7L273">
    <property type="expression patterns" value="baseline and differential"/>
</dbReference>
<dbReference type="GO" id="GO:0097602">
    <property type="term" value="F:cullin family protein binding"/>
    <property type="evidence" value="ECO:0000314"/>
    <property type="project" value="UniProtKB"/>
</dbReference>
<dbReference type="GO" id="GO:0042802">
    <property type="term" value="F:identical protein binding"/>
    <property type="evidence" value="ECO:0000353"/>
    <property type="project" value="IntAct"/>
</dbReference>
<dbReference type="GO" id="GO:0035556">
    <property type="term" value="P:intracellular signal transduction"/>
    <property type="evidence" value="ECO:0007669"/>
    <property type="project" value="InterPro"/>
</dbReference>
<dbReference type="GO" id="GO:0051260">
    <property type="term" value="P:protein homooligomerization"/>
    <property type="evidence" value="ECO:0007669"/>
    <property type="project" value="InterPro"/>
</dbReference>
<dbReference type="GO" id="GO:0016567">
    <property type="term" value="P:protein ubiquitination"/>
    <property type="evidence" value="ECO:0007669"/>
    <property type="project" value="UniProtKB-UniPathway"/>
</dbReference>
<dbReference type="CDD" id="cd18368">
    <property type="entry name" value="BTB_POZ_KCTD9"/>
    <property type="match status" value="1"/>
</dbReference>
<dbReference type="CDD" id="cd17073">
    <property type="entry name" value="KHA"/>
    <property type="match status" value="1"/>
</dbReference>
<dbReference type="FunFam" id="3.30.710.10:FF:000044">
    <property type="entry name" value="BTB/POZ domain-containing protein KCTD9 isoform X1"/>
    <property type="match status" value="1"/>
</dbReference>
<dbReference type="FunFam" id="2.160.20.80:FF:000002">
    <property type="entry name" value="Potassium channel tetramerization domain-containing 9a"/>
    <property type="match status" value="1"/>
</dbReference>
<dbReference type="Gene3D" id="2.160.20.80">
    <property type="entry name" value="E3 ubiquitin-protein ligase SopA"/>
    <property type="match status" value="1"/>
</dbReference>
<dbReference type="Gene3D" id="3.30.710.10">
    <property type="entry name" value="Potassium Channel Kv1.1, Chain A"/>
    <property type="match status" value="1"/>
</dbReference>
<dbReference type="InterPro" id="IPR001646">
    <property type="entry name" value="5peptide_repeat"/>
</dbReference>
<dbReference type="InterPro" id="IPR000210">
    <property type="entry name" value="BTB/POZ_dom"/>
</dbReference>
<dbReference type="InterPro" id="IPR036572">
    <property type="entry name" value="Doublecortin_dom_sf"/>
</dbReference>
<dbReference type="InterPro" id="IPR021789">
    <property type="entry name" value="KHA_dom"/>
</dbReference>
<dbReference type="InterPro" id="IPR051082">
    <property type="entry name" value="Pentapeptide-BTB/POZ_domain"/>
</dbReference>
<dbReference type="InterPro" id="IPR011333">
    <property type="entry name" value="SKP1/BTB/POZ_sf"/>
</dbReference>
<dbReference type="InterPro" id="IPR003131">
    <property type="entry name" value="T1-type_BTB"/>
</dbReference>
<dbReference type="PANTHER" id="PTHR14136">
    <property type="entry name" value="BTB_POZ DOMAIN-CONTAINING PROTEIN KCTD9"/>
    <property type="match status" value="1"/>
</dbReference>
<dbReference type="PANTHER" id="PTHR14136:SF17">
    <property type="entry name" value="BTB_POZ DOMAIN-CONTAINING PROTEIN KCTD9"/>
    <property type="match status" value="1"/>
</dbReference>
<dbReference type="Pfam" id="PF02214">
    <property type="entry name" value="BTB_2"/>
    <property type="match status" value="1"/>
</dbReference>
<dbReference type="Pfam" id="PF11834">
    <property type="entry name" value="KHA"/>
    <property type="match status" value="1"/>
</dbReference>
<dbReference type="Pfam" id="PF00805">
    <property type="entry name" value="Pentapeptide"/>
    <property type="match status" value="2"/>
</dbReference>
<dbReference type="SMART" id="SM00225">
    <property type="entry name" value="BTB"/>
    <property type="match status" value="1"/>
</dbReference>
<dbReference type="SUPFAM" id="SSF89837">
    <property type="entry name" value="Doublecortin (DC)"/>
    <property type="match status" value="1"/>
</dbReference>
<dbReference type="SUPFAM" id="SSF141571">
    <property type="entry name" value="Pentapeptide repeat-like"/>
    <property type="match status" value="1"/>
</dbReference>
<dbReference type="SUPFAM" id="SSF54695">
    <property type="entry name" value="POZ domain"/>
    <property type="match status" value="1"/>
</dbReference>
<dbReference type="PROSITE" id="PS50097">
    <property type="entry name" value="BTB"/>
    <property type="match status" value="1"/>
</dbReference>
<dbReference type="PROSITE" id="PS51490">
    <property type="entry name" value="KHA"/>
    <property type="match status" value="1"/>
</dbReference>
<gene>
    <name type="primary">KCTD9</name>
</gene>
<keyword id="KW-0002">3D-structure</keyword>
<keyword id="KW-0597">Phosphoprotein</keyword>
<keyword id="KW-1267">Proteomics identification</keyword>
<keyword id="KW-1185">Reference proteome</keyword>
<keyword id="KW-0677">Repeat</keyword>
<keyword id="KW-0833">Ubl conjugation pathway</keyword>
<reference key="1">
    <citation type="journal article" date="2004" name="Genome Res.">
        <title>The status, quality, and expansion of the NIH full-length cDNA project: the Mammalian Gene Collection (MGC).</title>
        <authorList>
            <consortium name="The MGC Project Team"/>
        </authorList>
    </citation>
    <scope>NUCLEOTIDE SEQUENCE [LARGE SCALE MRNA]</scope>
    <source>
        <tissue>Testis</tissue>
        <tissue>Uterus</tissue>
    </source>
</reference>
<reference key="2">
    <citation type="journal article" date="2004" name="Nat. Genet.">
        <title>Complete sequencing and characterization of 21,243 full-length human cDNAs.</title>
        <authorList>
            <person name="Ota T."/>
            <person name="Suzuki Y."/>
            <person name="Nishikawa T."/>
            <person name="Otsuki T."/>
            <person name="Sugiyama T."/>
            <person name="Irie R."/>
            <person name="Wakamatsu A."/>
            <person name="Hayashi K."/>
            <person name="Sato H."/>
            <person name="Nagai K."/>
            <person name="Kimura K."/>
            <person name="Makita H."/>
            <person name="Sekine M."/>
            <person name="Obayashi M."/>
            <person name="Nishi T."/>
            <person name="Shibahara T."/>
            <person name="Tanaka T."/>
            <person name="Ishii S."/>
            <person name="Yamamoto J."/>
            <person name="Saito K."/>
            <person name="Kawai Y."/>
            <person name="Isono Y."/>
            <person name="Nakamura Y."/>
            <person name="Nagahari K."/>
            <person name="Murakami K."/>
            <person name="Yasuda T."/>
            <person name="Iwayanagi T."/>
            <person name="Wagatsuma M."/>
            <person name="Shiratori A."/>
            <person name="Sudo H."/>
            <person name="Hosoiri T."/>
            <person name="Kaku Y."/>
            <person name="Kodaira H."/>
            <person name="Kondo H."/>
            <person name="Sugawara M."/>
            <person name="Takahashi M."/>
            <person name="Kanda K."/>
            <person name="Yokoi T."/>
            <person name="Furuya T."/>
            <person name="Kikkawa E."/>
            <person name="Omura Y."/>
            <person name="Abe K."/>
            <person name="Kamihara K."/>
            <person name="Katsuta N."/>
            <person name="Sato K."/>
            <person name="Tanikawa M."/>
            <person name="Yamazaki M."/>
            <person name="Ninomiya K."/>
            <person name="Ishibashi T."/>
            <person name="Yamashita H."/>
            <person name="Murakawa K."/>
            <person name="Fujimori K."/>
            <person name="Tanai H."/>
            <person name="Kimata M."/>
            <person name="Watanabe M."/>
            <person name="Hiraoka S."/>
            <person name="Chiba Y."/>
            <person name="Ishida S."/>
            <person name="Ono Y."/>
            <person name="Takiguchi S."/>
            <person name="Watanabe S."/>
            <person name="Yosida M."/>
            <person name="Hotuta T."/>
            <person name="Kusano J."/>
            <person name="Kanehori K."/>
            <person name="Takahashi-Fujii A."/>
            <person name="Hara H."/>
            <person name="Tanase T.-O."/>
            <person name="Nomura Y."/>
            <person name="Togiya S."/>
            <person name="Komai F."/>
            <person name="Hara R."/>
            <person name="Takeuchi K."/>
            <person name="Arita M."/>
            <person name="Imose N."/>
            <person name="Musashino K."/>
            <person name="Yuuki H."/>
            <person name="Oshima A."/>
            <person name="Sasaki N."/>
            <person name="Aotsuka S."/>
            <person name="Yoshikawa Y."/>
            <person name="Matsunawa H."/>
            <person name="Ichihara T."/>
            <person name="Shiohata N."/>
            <person name="Sano S."/>
            <person name="Moriya S."/>
            <person name="Momiyama H."/>
            <person name="Satoh N."/>
            <person name="Takami S."/>
            <person name="Terashima Y."/>
            <person name="Suzuki O."/>
            <person name="Nakagawa S."/>
            <person name="Senoh A."/>
            <person name="Mizoguchi H."/>
            <person name="Goto Y."/>
            <person name="Shimizu F."/>
            <person name="Wakebe H."/>
            <person name="Hishigaki H."/>
            <person name="Watanabe T."/>
            <person name="Sugiyama A."/>
            <person name="Takemoto M."/>
            <person name="Kawakami B."/>
            <person name="Yamazaki M."/>
            <person name="Watanabe K."/>
            <person name="Kumagai A."/>
            <person name="Itakura S."/>
            <person name="Fukuzumi Y."/>
            <person name="Fujimori Y."/>
            <person name="Komiyama M."/>
            <person name="Tashiro H."/>
            <person name="Tanigami A."/>
            <person name="Fujiwara T."/>
            <person name="Ono T."/>
            <person name="Yamada K."/>
            <person name="Fujii Y."/>
            <person name="Ozaki K."/>
            <person name="Hirao M."/>
            <person name="Ohmori Y."/>
            <person name="Kawabata A."/>
            <person name="Hikiji T."/>
            <person name="Kobatake N."/>
            <person name="Inagaki H."/>
            <person name="Ikema Y."/>
            <person name="Okamoto S."/>
            <person name="Okitani R."/>
            <person name="Kawakami T."/>
            <person name="Noguchi S."/>
            <person name="Itoh T."/>
            <person name="Shigeta K."/>
            <person name="Senba T."/>
            <person name="Matsumura K."/>
            <person name="Nakajima Y."/>
            <person name="Mizuno T."/>
            <person name="Morinaga M."/>
            <person name="Sasaki M."/>
            <person name="Togashi T."/>
            <person name="Oyama M."/>
            <person name="Hata H."/>
            <person name="Watanabe M."/>
            <person name="Komatsu T."/>
            <person name="Mizushima-Sugano J."/>
            <person name="Satoh T."/>
            <person name="Shirai Y."/>
            <person name="Takahashi Y."/>
            <person name="Nakagawa K."/>
            <person name="Okumura K."/>
            <person name="Nagase T."/>
            <person name="Nomura N."/>
            <person name="Kikuchi H."/>
            <person name="Masuho Y."/>
            <person name="Yamashita R."/>
            <person name="Nakai K."/>
            <person name="Yada T."/>
            <person name="Nakamura Y."/>
            <person name="Ohara O."/>
            <person name="Isogai T."/>
            <person name="Sugano S."/>
        </authorList>
    </citation>
    <scope>NUCLEOTIDE SEQUENCE [LARGE SCALE MRNA] OF 151-389</scope>
    <source>
        <tissue>Colon</tissue>
    </source>
</reference>
<reference key="3">
    <citation type="journal article" date="2013" name="J. Proteome Res.">
        <title>Toward a comprehensive characterization of a human cancer cell phosphoproteome.</title>
        <authorList>
            <person name="Zhou H."/>
            <person name="Di Palma S."/>
            <person name="Preisinger C."/>
            <person name="Peng M."/>
            <person name="Polat A.N."/>
            <person name="Heck A.J."/>
            <person name="Mohammed S."/>
        </authorList>
    </citation>
    <scope>PHOSPHORYLATION [LARGE SCALE ANALYSIS] AT SER-11</scope>
    <scope>IDENTIFICATION BY MASS SPECTROMETRY [LARGE SCALE ANALYSIS]</scope>
    <source>
        <tissue>Erythroleukemia</tissue>
    </source>
</reference>
<reference key="4">
    <citation type="journal article" date="2016" name="J. Mol. Biol.">
        <title>Structural insights into KCTD protein assembly and CULLIN3 recognition.</title>
        <authorList>
            <person name="Ji A.X."/>
            <person name="Chu A."/>
            <person name="Nielsen T.K."/>
            <person name="Benlekbir S."/>
            <person name="Rubinstein J.L."/>
            <person name="Prive G.G."/>
        </authorList>
    </citation>
    <scope>X-RAY CRYSTALLOGRAPHY (2.76 ANGSTROMS) OF 89-191</scope>
    <scope>PENTAMERIZATION</scope>
    <scope>INTERACTION WITH CUL3</scope>
    <scope>MUTAGENESIS OF VAL-125</scope>
</reference>